<sequence>MAEERSQRSRDRSREEKIDDGMIEKLVAVNRVSKTVKGGRQFTFTALTIVGNGEGSVGFGYGKAREVPVAIQKSMEYARKRMSNVSLNNGTLWHPVKANHGAASVFMKPASEGTGVIAGGAMRAVLEAVGVKNVLAKAIGSRNPINLVRATLKGLEDMQSPTHIALKRGKNVRDFSHGS</sequence>
<dbReference type="EMBL" id="CP001011">
    <property type="protein sequence ID" value="ACB91897.1"/>
    <property type="molecule type" value="Genomic_DNA"/>
</dbReference>
<dbReference type="RefSeq" id="WP_004090125.1">
    <property type="nucleotide sequence ID" value="NC_010577.1"/>
</dbReference>
<dbReference type="SMR" id="B2I8I6"/>
<dbReference type="GeneID" id="93904156"/>
<dbReference type="KEGG" id="xfn:XfasM23_0450"/>
<dbReference type="HOGENOM" id="CLU_065898_2_2_6"/>
<dbReference type="Proteomes" id="UP000001698">
    <property type="component" value="Chromosome"/>
</dbReference>
<dbReference type="GO" id="GO:0015935">
    <property type="term" value="C:small ribosomal subunit"/>
    <property type="evidence" value="ECO:0007669"/>
    <property type="project" value="InterPro"/>
</dbReference>
<dbReference type="GO" id="GO:0019843">
    <property type="term" value="F:rRNA binding"/>
    <property type="evidence" value="ECO:0007669"/>
    <property type="project" value="UniProtKB-UniRule"/>
</dbReference>
<dbReference type="GO" id="GO:0003735">
    <property type="term" value="F:structural constituent of ribosome"/>
    <property type="evidence" value="ECO:0007669"/>
    <property type="project" value="InterPro"/>
</dbReference>
<dbReference type="GO" id="GO:0006412">
    <property type="term" value="P:translation"/>
    <property type="evidence" value="ECO:0007669"/>
    <property type="project" value="UniProtKB-UniRule"/>
</dbReference>
<dbReference type="FunFam" id="3.30.160.20:FF:000001">
    <property type="entry name" value="30S ribosomal protein S5"/>
    <property type="match status" value="1"/>
</dbReference>
<dbReference type="FunFam" id="3.30.230.10:FF:000002">
    <property type="entry name" value="30S ribosomal protein S5"/>
    <property type="match status" value="1"/>
</dbReference>
<dbReference type="Gene3D" id="3.30.160.20">
    <property type="match status" value="1"/>
</dbReference>
<dbReference type="Gene3D" id="3.30.230.10">
    <property type="match status" value="1"/>
</dbReference>
<dbReference type="HAMAP" id="MF_01307_B">
    <property type="entry name" value="Ribosomal_uS5_B"/>
    <property type="match status" value="1"/>
</dbReference>
<dbReference type="InterPro" id="IPR020568">
    <property type="entry name" value="Ribosomal_Su5_D2-typ_SF"/>
</dbReference>
<dbReference type="InterPro" id="IPR000851">
    <property type="entry name" value="Ribosomal_uS5"/>
</dbReference>
<dbReference type="InterPro" id="IPR005712">
    <property type="entry name" value="Ribosomal_uS5_bac-type"/>
</dbReference>
<dbReference type="InterPro" id="IPR005324">
    <property type="entry name" value="Ribosomal_uS5_C"/>
</dbReference>
<dbReference type="InterPro" id="IPR013810">
    <property type="entry name" value="Ribosomal_uS5_N"/>
</dbReference>
<dbReference type="InterPro" id="IPR018192">
    <property type="entry name" value="Ribosomal_uS5_N_CS"/>
</dbReference>
<dbReference type="InterPro" id="IPR014721">
    <property type="entry name" value="Ribsml_uS5_D2-typ_fold_subgr"/>
</dbReference>
<dbReference type="NCBIfam" id="TIGR01021">
    <property type="entry name" value="rpsE_bact"/>
    <property type="match status" value="1"/>
</dbReference>
<dbReference type="PANTHER" id="PTHR48277">
    <property type="entry name" value="MITOCHONDRIAL RIBOSOMAL PROTEIN S5"/>
    <property type="match status" value="1"/>
</dbReference>
<dbReference type="PANTHER" id="PTHR48277:SF1">
    <property type="entry name" value="MITOCHONDRIAL RIBOSOMAL PROTEIN S5"/>
    <property type="match status" value="1"/>
</dbReference>
<dbReference type="Pfam" id="PF00333">
    <property type="entry name" value="Ribosomal_S5"/>
    <property type="match status" value="1"/>
</dbReference>
<dbReference type="Pfam" id="PF03719">
    <property type="entry name" value="Ribosomal_S5_C"/>
    <property type="match status" value="1"/>
</dbReference>
<dbReference type="SUPFAM" id="SSF54768">
    <property type="entry name" value="dsRNA-binding domain-like"/>
    <property type="match status" value="1"/>
</dbReference>
<dbReference type="SUPFAM" id="SSF54211">
    <property type="entry name" value="Ribosomal protein S5 domain 2-like"/>
    <property type="match status" value="1"/>
</dbReference>
<dbReference type="PROSITE" id="PS00585">
    <property type="entry name" value="RIBOSOMAL_S5"/>
    <property type="match status" value="1"/>
</dbReference>
<dbReference type="PROSITE" id="PS50881">
    <property type="entry name" value="S5_DSRBD"/>
    <property type="match status" value="1"/>
</dbReference>
<keyword id="KW-0687">Ribonucleoprotein</keyword>
<keyword id="KW-0689">Ribosomal protein</keyword>
<keyword id="KW-0694">RNA-binding</keyword>
<keyword id="KW-0699">rRNA-binding</keyword>
<name>RS5_XYLF2</name>
<reference key="1">
    <citation type="journal article" date="2010" name="J. Bacteriol.">
        <title>Whole genome sequences of two Xylella fastidiosa strains (M12 and M23) causing almond leaf scorch disease in California.</title>
        <authorList>
            <person name="Chen J."/>
            <person name="Xie G."/>
            <person name="Han S."/>
            <person name="Chertkov O."/>
            <person name="Sims D."/>
            <person name="Civerolo E.L."/>
        </authorList>
    </citation>
    <scope>NUCLEOTIDE SEQUENCE [LARGE SCALE GENOMIC DNA]</scope>
    <source>
        <strain>M23</strain>
    </source>
</reference>
<feature type="chain" id="PRO_1000140908" description="Small ribosomal subunit protein uS5">
    <location>
        <begin position="1"/>
        <end position="179"/>
    </location>
</feature>
<feature type="domain" description="S5 DRBM" evidence="1">
    <location>
        <begin position="22"/>
        <end position="85"/>
    </location>
</feature>
<evidence type="ECO:0000255" key="1">
    <source>
        <dbReference type="HAMAP-Rule" id="MF_01307"/>
    </source>
</evidence>
<evidence type="ECO:0000305" key="2"/>
<proteinExistence type="inferred from homology"/>
<comment type="function">
    <text evidence="1">With S4 and S12 plays an important role in translational accuracy.</text>
</comment>
<comment type="function">
    <text evidence="1">Located at the back of the 30S subunit body where it stabilizes the conformation of the head with respect to the body.</text>
</comment>
<comment type="subunit">
    <text evidence="1">Part of the 30S ribosomal subunit. Contacts proteins S4 and S8.</text>
</comment>
<comment type="domain">
    <text>The N-terminal domain interacts with the head of the 30S subunit; the C-terminal domain interacts with the body and contacts protein S4. The interaction surface between S4 and S5 is involved in control of translational fidelity.</text>
</comment>
<comment type="similarity">
    <text evidence="1">Belongs to the universal ribosomal protein uS5 family.</text>
</comment>
<accession>B2I8I6</accession>
<organism>
    <name type="scientific">Xylella fastidiosa (strain M23)</name>
    <dbReference type="NCBI Taxonomy" id="405441"/>
    <lineage>
        <taxon>Bacteria</taxon>
        <taxon>Pseudomonadati</taxon>
        <taxon>Pseudomonadota</taxon>
        <taxon>Gammaproteobacteria</taxon>
        <taxon>Lysobacterales</taxon>
        <taxon>Lysobacteraceae</taxon>
        <taxon>Xylella</taxon>
    </lineage>
</organism>
<protein>
    <recommendedName>
        <fullName evidence="1">Small ribosomal subunit protein uS5</fullName>
    </recommendedName>
    <alternativeName>
        <fullName evidence="2">30S ribosomal protein S5</fullName>
    </alternativeName>
</protein>
<gene>
    <name evidence="1" type="primary">rpsE</name>
    <name type="ordered locus">XfasM23_0450</name>
</gene>